<keyword id="KW-0067">ATP-binding</keyword>
<keyword id="KW-0378">Hydrolase</keyword>
<keyword id="KW-0472">Membrane</keyword>
<keyword id="KW-0547">Nucleotide-binding</keyword>
<keyword id="KW-0548">Nucleotidyltransferase</keyword>
<keyword id="KW-1185">Reference proteome</keyword>
<keyword id="KW-0677">Repeat</keyword>
<keyword id="KW-0802">TPR repeat</keyword>
<keyword id="KW-0808">Transferase</keyword>
<keyword id="KW-0812">Transmembrane</keyword>
<keyword id="KW-1133">Transmembrane helix</keyword>
<protein>
    <recommendedName>
        <fullName>Protein adenylyltransferase Fic</fullName>
        <ecNumber evidence="2">2.7.7.108</ecNumber>
    </recommendedName>
    <alternativeName>
        <fullName evidence="7">De-AMPylase Fic</fullName>
        <ecNumber evidence="1 2">3.1.4.-</ecNumber>
    </alternativeName>
</protein>
<organism>
    <name type="scientific">Drosophila sechellia</name>
    <name type="common">Fruit fly</name>
    <dbReference type="NCBI Taxonomy" id="7238"/>
    <lineage>
        <taxon>Eukaryota</taxon>
        <taxon>Metazoa</taxon>
        <taxon>Ecdysozoa</taxon>
        <taxon>Arthropoda</taxon>
        <taxon>Hexapoda</taxon>
        <taxon>Insecta</taxon>
        <taxon>Pterygota</taxon>
        <taxon>Neoptera</taxon>
        <taxon>Endopterygota</taxon>
        <taxon>Diptera</taxon>
        <taxon>Brachycera</taxon>
        <taxon>Muscomorpha</taxon>
        <taxon>Ephydroidea</taxon>
        <taxon>Drosophilidae</taxon>
        <taxon>Drosophila</taxon>
        <taxon>Sophophora</taxon>
    </lineage>
</organism>
<evidence type="ECO:0000250" key="1">
    <source>
        <dbReference type="UniProtKB" id="A0A061I403"/>
    </source>
</evidence>
<evidence type="ECO:0000250" key="2">
    <source>
        <dbReference type="UniProtKB" id="Q8SWV6"/>
    </source>
</evidence>
<evidence type="ECO:0000250" key="3">
    <source>
        <dbReference type="UniProtKB" id="Q9BVA6"/>
    </source>
</evidence>
<evidence type="ECO:0000255" key="4"/>
<evidence type="ECO:0000255" key="5">
    <source>
        <dbReference type="PROSITE-ProRule" id="PRU00791"/>
    </source>
</evidence>
<evidence type="ECO:0000256" key="6">
    <source>
        <dbReference type="SAM" id="MobiDB-lite"/>
    </source>
</evidence>
<evidence type="ECO:0000305" key="7"/>
<name>FICD_DROSE</name>
<dbReference type="EC" id="2.7.7.108" evidence="2"/>
<dbReference type="EC" id="3.1.4.-" evidence="1 2"/>
<dbReference type="EMBL" id="CH480820">
    <property type="protein sequence ID" value="EDW54512.1"/>
    <property type="molecule type" value="Genomic_DNA"/>
</dbReference>
<dbReference type="SMR" id="B4I1V5"/>
<dbReference type="STRING" id="7238.B4I1V5"/>
<dbReference type="EnsemblMetazoa" id="FBtr0201614">
    <property type="protein sequence ID" value="FBpp0200106"/>
    <property type="gene ID" value="FBgn0173535"/>
</dbReference>
<dbReference type="EnsemblMetazoa" id="XM_002038058.2">
    <property type="protein sequence ID" value="XP_002038094.1"/>
    <property type="gene ID" value="LOC6613624"/>
</dbReference>
<dbReference type="GeneID" id="6613624"/>
<dbReference type="KEGG" id="dse:6613624"/>
<dbReference type="CTD" id="33897"/>
<dbReference type="HOGENOM" id="CLU_040460_0_0_1"/>
<dbReference type="OMA" id="QLRCQLW"/>
<dbReference type="OrthoDB" id="43370at7215"/>
<dbReference type="PhylomeDB" id="B4I1V5"/>
<dbReference type="Proteomes" id="UP000001292">
    <property type="component" value="Unassembled WGS sequence"/>
</dbReference>
<dbReference type="GO" id="GO:0005886">
    <property type="term" value="C:plasma membrane"/>
    <property type="evidence" value="ECO:0007669"/>
    <property type="project" value="EnsemblMetazoa"/>
</dbReference>
<dbReference type="GO" id="GO:0070733">
    <property type="term" value="F:AMPylase activity"/>
    <property type="evidence" value="ECO:0000250"/>
    <property type="project" value="UniProtKB"/>
</dbReference>
<dbReference type="GO" id="GO:0005524">
    <property type="term" value="F:ATP binding"/>
    <property type="evidence" value="ECO:0007669"/>
    <property type="project" value="UniProtKB-KW"/>
</dbReference>
<dbReference type="GO" id="GO:0030544">
    <property type="term" value="F:Hsp70 protein binding"/>
    <property type="evidence" value="ECO:0007669"/>
    <property type="project" value="EnsemblMetazoa"/>
</dbReference>
<dbReference type="GO" id="GO:0044603">
    <property type="term" value="F:protein adenylylhydrolase activity"/>
    <property type="evidence" value="ECO:0007669"/>
    <property type="project" value="EnsemblMetazoa"/>
</dbReference>
<dbReference type="GO" id="GO:0042803">
    <property type="term" value="F:protein homodimerization activity"/>
    <property type="evidence" value="ECO:0007669"/>
    <property type="project" value="EnsemblMetazoa"/>
</dbReference>
<dbReference type="GO" id="GO:0050908">
    <property type="term" value="P:detection of light stimulus involved in visual perception"/>
    <property type="evidence" value="ECO:0007669"/>
    <property type="project" value="EnsemblMetazoa"/>
</dbReference>
<dbReference type="GO" id="GO:0051608">
    <property type="term" value="P:histamine transport"/>
    <property type="evidence" value="ECO:0007669"/>
    <property type="project" value="EnsemblMetazoa"/>
</dbReference>
<dbReference type="GO" id="GO:0018117">
    <property type="term" value="P:protein adenylylation"/>
    <property type="evidence" value="ECO:0000250"/>
    <property type="project" value="UniProtKB"/>
</dbReference>
<dbReference type="GO" id="GO:0034976">
    <property type="term" value="P:response to endoplasmic reticulum stress"/>
    <property type="evidence" value="ECO:0007669"/>
    <property type="project" value="EnsemblMetazoa"/>
</dbReference>
<dbReference type="GO" id="GO:0007632">
    <property type="term" value="P:visual behavior"/>
    <property type="evidence" value="ECO:0007669"/>
    <property type="project" value="EnsemblMetazoa"/>
</dbReference>
<dbReference type="FunFam" id="1.10.3290.10:FF:000001">
    <property type="entry name" value="adenosine monophosphate-protein transferase FICD"/>
    <property type="match status" value="1"/>
</dbReference>
<dbReference type="FunFam" id="1.25.40.10:FF:000522">
    <property type="entry name" value="Protein adenylyltransferase Fic"/>
    <property type="match status" value="1"/>
</dbReference>
<dbReference type="Gene3D" id="1.10.3290.10">
    <property type="entry name" value="Fido-like domain"/>
    <property type="match status" value="1"/>
</dbReference>
<dbReference type="Gene3D" id="1.25.40.10">
    <property type="entry name" value="Tetratricopeptide repeat domain"/>
    <property type="match status" value="1"/>
</dbReference>
<dbReference type="InterPro" id="IPR003812">
    <property type="entry name" value="Fido"/>
</dbReference>
<dbReference type="InterPro" id="IPR036597">
    <property type="entry name" value="Fido-like_dom_sf"/>
</dbReference>
<dbReference type="InterPro" id="IPR040198">
    <property type="entry name" value="Fido_containing"/>
</dbReference>
<dbReference type="InterPro" id="IPR011990">
    <property type="entry name" value="TPR-like_helical_dom_sf"/>
</dbReference>
<dbReference type="PANTHER" id="PTHR13504">
    <property type="entry name" value="FIDO DOMAIN-CONTAINING PROTEIN DDB_G0283145"/>
    <property type="match status" value="1"/>
</dbReference>
<dbReference type="PANTHER" id="PTHR13504:SF34">
    <property type="entry name" value="PROTEIN ADENYLYLTRANSFERASE FICD"/>
    <property type="match status" value="1"/>
</dbReference>
<dbReference type="Pfam" id="PF02661">
    <property type="entry name" value="Fic"/>
    <property type="match status" value="1"/>
</dbReference>
<dbReference type="SUPFAM" id="SSF140931">
    <property type="entry name" value="Fic-like"/>
    <property type="match status" value="1"/>
</dbReference>
<dbReference type="SUPFAM" id="SSF48452">
    <property type="entry name" value="TPR-like"/>
    <property type="match status" value="1"/>
</dbReference>
<dbReference type="PROSITE" id="PS51459">
    <property type="entry name" value="FIDO"/>
    <property type="match status" value="1"/>
</dbReference>
<dbReference type="PROSITE" id="PS50293">
    <property type="entry name" value="TPR_REGION"/>
    <property type="match status" value="1"/>
</dbReference>
<accession>B4I1V5</accession>
<gene>
    <name type="ORF">GM18629</name>
</gene>
<proteinExistence type="inferred from homology"/>
<sequence>MCTEAEQPSPPAQQQEQGNPPLCKAQNPKPARLYRLVLLFVAGSLAAWTFHALSSTNLVWKLRQLHHLPTAHYLQTRDEFALYSVEELNAFKEFYDKSVSDSVGASYTEAEQTNIKEALGALRMAQDLYLAGKDDKAARLFEHALALAPRHPEVLLRYGEFLEHNQRNIVLADQYYFQALTISPSNSEALANRQRTADVVQSLDERRLESLDSKRDALSAIHESNGALRRAKKEAYFQHIYHSVGIEGNTMTLAQTRSILETRMAVDGKSIDEHNEILGMDLAMKYINASLVQKIDITIKDILELHRRVLGHVDPIEGGEFRRNQVYVGGHIPPGPGDLALLMQRFERWLNSEHSSTLHPVNYAALAHYKLVHIHPFVDGNGRTSRLLMNTLLMRAGYPPVIIPKQQRSKYYHFLKLANEGDIRPFVRFIADCTEKTLDLYLWATSDLPQQIPMLIQTESEAGERLAQMQSPNVAQRSSILEFYESGSGDIP</sequence>
<reference key="1">
    <citation type="journal article" date="2007" name="Nature">
        <title>Evolution of genes and genomes on the Drosophila phylogeny.</title>
        <authorList>
            <consortium name="Drosophila 12 genomes consortium"/>
        </authorList>
    </citation>
    <scope>NUCLEOTIDE SEQUENCE [LARGE SCALE GENOMIC DNA]</scope>
    <source>
        <strain>Rob3c / Tucson 14021-0248.25</strain>
    </source>
</reference>
<comment type="function">
    <text evidence="1 2">Protein that can both mediate the addition of adenosine 5'-monophosphate (AMP) to specific residues of target proteins (AMPylation), and the removal of the same modification from target proteins (de-AMPylation), depending on the context (By similarity). The side chain of Glu-247 determines which of the two opposing activities (AMPylase or de-AMPylase) will take place (By similarity). Acts as a key regulator of the unfolded protein response (UPR) by mediating AMPylation or de-AMPylation of Hsc70-3/BiP. In unstressed cells, acts as an adenylyltransferase by mediating AMPylation of Hsc70-3/BiP at 'Thr-518', thereby inactivating it. In response to endoplasmic reticulum stress, acts as a phosphodiesterase by mediating removal of ATP (de-AMPylation) from Hsc70-3/BiP at 'Thr-518', leading to restore HSPA5/BiP activity (By similarity).</text>
</comment>
<comment type="catalytic activity">
    <reaction evidence="3">
        <text>L-tyrosyl-[protein] + ATP = O-(5'-adenylyl)-L-tyrosyl-[protein] + diphosphate</text>
        <dbReference type="Rhea" id="RHEA:54288"/>
        <dbReference type="Rhea" id="RHEA-COMP:10136"/>
        <dbReference type="Rhea" id="RHEA-COMP:13846"/>
        <dbReference type="ChEBI" id="CHEBI:30616"/>
        <dbReference type="ChEBI" id="CHEBI:33019"/>
        <dbReference type="ChEBI" id="CHEBI:46858"/>
        <dbReference type="ChEBI" id="CHEBI:83624"/>
        <dbReference type="EC" id="2.7.7.108"/>
    </reaction>
</comment>
<comment type="catalytic activity">
    <reaction evidence="2">
        <text>L-threonyl-[protein] + ATP = 3-O-(5'-adenylyl)-L-threonyl-[protein] + diphosphate</text>
        <dbReference type="Rhea" id="RHEA:54292"/>
        <dbReference type="Rhea" id="RHEA-COMP:11060"/>
        <dbReference type="Rhea" id="RHEA-COMP:13847"/>
        <dbReference type="ChEBI" id="CHEBI:30013"/>
        <dbReference type="ChEBI" id="CHEBI:30616"/>
        <dbReference type="ChEBI" id="CHEBI:33019"/>
        <dbReference type="ChEBI" id="CHEBI:138113"/>
        <dbReference type="EC" id="2.7.7.108"/>
    </reaction>
</comment>
<comment type="catalytic activity">
    <reaction evidence="2">
        <text>3-O-(5'-adenylyl)-L-threonyl-[protein] + H2O = L-threonyl-[protein] + AMP + H(+)</text>
        <dbReference type="Rhea" id="RHEA:55932"/>
        <dbReference type="Rhea" id="RHEA-COMP:11060"/>
        <dbReference type="Rhea" id="RHEA-COMP:13847"/>
        <dbReference type="ChEBI" id="CHEBI:15377"/>
        <dbReference type="ChEBI" id="CHEBI:15378"/>
        <dbReference type="ChEBI" id="CHEBI:30013"/>
        <dbReference type="ChEBI" id="CHEBI:138113"/>
        <dbReference type="ChEBI" id="CHEBI:456215"/>
    </reaction>
</comment>
<comment type="activity regulation">
    <text evidence="1 3">The side chain of Glu-247 determines which of the two opposing activities (AMPylase or de-AMPylase) will take place. In response to endoplasmic reticulum stress, mediates de-AMPylase activity (By similarity). Adenylyltransferase activity is inhibited by the inhibitory helix present at the N-terminus: Glu-247 binds ATP and competes with ATP-binding at Arg-386, thereby preventing adenylyltransferase activity (By similarity). In unstressed cells, disengagement of Glu-247 promotes adenylyltransferase activity (By similarity). Activation dissociates ATP-binding from Glu-247, allowing ordered binding of the entire ATP moiety with the alpha-phosphate in an orientation that is productive for accepting an incoming target hydroxyl side chain (By similarity).</text>
</comment>
<comment type="subunit">
    <text evidence="2">Homodimer.</text>
</comment>
<comment type="subcellular location">
    <subcellularLocation>
        <location evidence="2">Membrane</location>
        <topology evidence="2">Single-pass membrane protein</topology>
    </subcellularLocation>
</comment>
<comment type="domain">
    <text evidence="3">The fido domain mediates the adenylyltransferase activity.</text>
</comment>
<comment type="similarity">
    <text evidence="7">Belongs to the fic family.</text>
</comment>
<feature type="chain" id="PRO_0000381789" description="Protein adenylyltransferase Fic">
    <location>
        <begin position="1"/>
        <end position="492"/>
    </location>
</feature>
<feature type="transmembrane region" description="Helical" evidence="4">
    <location>
        <begin position="33"/>
        <end position="55"/>
    </location>
</feature>
<feature type="repeat" description="TPR 1">
    <location>
        <begin position="118"/>
        <end position="151"/>
    </location>
</feature>
<feature type="repeat" description="TPR 2">
    <location>
        <begin position="152"/>
        <end position="186"/>
    </location>
</feature>
<feature type="domain" description="Fido" evidence="5">
    <location>
        <begin position="297"/>
        <end position="432"/>
    </location>
</feature>
<feature type="region of interest" description="Disordered" evidence="6">
    <location>
        <begin position="1"/>
        <end position="25"/>
    </location>
</feature>
<feature type="short sequence motif" description="Inhibitory (S/T)XXXE(G/N) motif">
    <location>
        <begin position="243"/>
        <end position="248"/>
    </location>
</feature>
<feature type="compositionally biased region" description="Low complexity" evidence="6">
    <location>
        <begin position="1"/>
        <end position="17"/>
    </location>
</feature>
<feature type="active site" evidence="1">
    <location>
        <position position="375"/>
    </location>
</feature>
<feature type="binding site" evidence="3">
    <location>
        <position position="247"/>
    </location>
    <ligand>
        <name>ATP</name>
        <dbReference type="ChEBI" id="CHEBI:30616"/>
    </ligand>
</feature>
<feature type="binding site" evidence="3">
    <location>
        <begin position="328"/>
        <end position="331"/>
    </location>
    <ligand>
        <name>ATP</name>
        <dbReference type="ChEBI" id="CHEBI:30616"/>
    </ligand>
</feature>
<feature type="binding site" evidence="3">
    <location>
        <begin position="379"/>
        <end position="386"/>
    </location>
    <ligand>
        <name>ATP</name>
        <dbReference type="ChEBI" id="CHEBI:30616"/>
    </ligand>
</feature>
<feature type="binding site" evidence="3">
    <location>
        <begin position="411"/>
        <end position="412"/>
    </location>
    <ligand>
        <name>ATP</name>
        <dbReference type="ChEBI" id="CHEBI:30616"/>
    </ligand>
</feature>
<feature type="binding site" evidence="3">
    <location>
        <position position="419"/>
    </location>
    <ligand>
        <name>ATP</name>
        <dbReference type="ChEBI" id="CHEBI:30616"/>
    </ligand>
</feature>
<feature type="site" description="Important for autoinhibition of adenylyltransferase activity" evidence="3">
    <location>
        <position position="247"/>
    </location>
</feature>